<evidence type="ECO:0000255" key="1"/>
<evidence type="ECO:0000255" key="2">
    <source>
        <dbReference type="PROSITE-ProRule" id="PRU00282"/>
    </source>
</evidence>
<evidence type="ECO:0000269" key="3">
    <source>
    </source>
</evidence>
<evidence type="ECO:0000303" key="4">
    <source>
    </source>
</evidence>
<evidence type="ECO:0000305" key="5"/>
<evidence type="ECO:0000305" key="6">
    <source>
    </source>
</evidence>
<feature type="chain" id="PRO_0000457331" description="Mitochondrial citrate transporter D">
    <location>
        <begin position="1"/>
        <end position="305"/>
    </location>
</feature>
<feature type="transmembrane region" description="Helical; Name=1" evidence="1">
    <location>
        <begin position="16"/>
        <end position="36"/>
    </location>
</feature>
<feature type="transmembrane region" description="Helical; Name=2" evidence="1">
    <location>
        <begin position="78"/>
        <end position="98"/>
    </location>
</feature>
<feature type="transmembrane region" description="Helical; Name=3" evidence="1">
    <location>
        <begin position="118"/>
        <end position="137"/>
    </location>
</feature>
<feature type="transmembrane region" description="Helical; Name=4" evidence="1">
    <location>
        <begin position="176"/>
        <end position="196"/>
    </location>
</feature>
<feature type="transmembrane region" description="Helical; Name=5" evidence="1">
    <location>
        <begin position="208"/>
        <end position="228"/>
    </location>
</feature>
<feature type="transmembrane region" description="Helical; Name=6" evidence="1">
    <location>
        <begin position="270"/>
        <end position="291"/>
    </location>
</feature>
<feature type="repeat" description="Solcar 1" evidence="2">
    <location>
        <begin position="10"/>
        <end position="101"/>
    </location>
</feature>
<feature type="repeat" description="Solcar 2" evidence="2">
    <location>
        <begin position="111"/>
        <end position="197"/>
    </location>
</feature>
<feature type="repeat" description="Solcar 3" evidence="2">
    <location>
        <begin position="211"/>
        <end position="298"/>
    </location>
</feature>
<accession>G3YFS7</accession>
<organism>
    <name type="scientific">Aspergillus niger (strain ATCC 1015 / CBS 113.46 / FGSC A1144 / LSHB Ac4 / NCTC 3858a / NRRL 328 / USDA 3528.7)</name>
    <dbReference type="NCBI Taxonomy" id="380704"/>
    <lineage>
        <taxon>Eukaryota</taxon>
        <taxon>Fungi</taxon>
        <taxon>Dikarya</taxon>
        <taxon>Ascomycota</taxon>
        <taxon>Pezizomycotina</taxon>
        <taxon>Eurotiomycetes</taxon>
        <taxon>Eurotiomycetidae</taxon>
        <taxon>Eurotiales</taxon>
        <taxon>Aspergillaceae</taxon>
        <taxon>Aspergillus</taxon>
        <taxon>Aspergillus subgen. Circumdati</taxon>
    </lineage>
</organism>
<gene>
    <name evidence="4" type="primary">ctpD</name>
    <name type="ORF">ASPNIDRAFT_52803</name>
</gene>
<name>CTPD_ASPNA</name>
<comment type="function">
    <text evidence="3">Mitochondrial transporter that mediates citrate export from mitochondria to cytoplasm (PubMed:36177470). Both ctpA, ctpB, and ctpD play important roles in citric acid transport across the mitochondrial membrane and function in a redundant manner (PubMed:36177470).</text>
</comment>
<comment type="catalytic activity">
    <reaction evidence="3">
        <text>citrate(in) + H(+)(in) = citrate(out) + H(+)(out)</text>
        <dbReference type="Rhea" id="RHEA:32123"/>
        <dbReference type="ChEBI" id="CHEBI:15378"/>
        <dbReference type="ChEBI" id="CHEBI:16947"/>
    </reaction>
</comment>
<comment type="subcellular location">
    <subcellularLocation>
        <location evidence="6">Mitochondrion inner membrane</location>
        <topology evidence="1">Multi-pass membrane protein</topology>
    </subcellularLocation>
</comment>
<comment type="disruption phenotype">
    <text evidence="3">Leads to fluffy and albino colonies, and reduced conidia formation, when all 6 genes ctpA to ctpF are deleted.</text>
</comment>
<comment type="similarity">
    <text evidence="5">Belongs to the mitochondrial carrier (TC 2.A.29) family.</text>
</comment>
<keyword id="KW-0472">Membrane</keyword>
<keyword id="KW-0496">Mitochondrion</keyword>
<keyword id="KW-0999">Mitochondrion inner membrane</keyword>
<keyword id="KW-0677">Repeat</keyword>
<keyword id="KW-1278">Translocase</keyword>
<keyword id="KW-0812">Transmembrane</keyword>
<keyword id="KW-1133">Transmembrane helix</keyword>
<keyword id="KW-0813">Transport</keyword>
<sequence length="305" mass="33292">MSNNNTQKPLPFGYQFIAGAVAGVSEILVMYPLDVVKTRVQLQKGTAVAGEEYYNGMFDCLRKIVKNEGFSRLYRGISAPILMEAPKRATKFAANDSWGAFYRNLFGAEKQTQSLAILTGATAGATESFVVVPFELVKIRLQDRASAGKYNGMLDVVKKIVAAEGPLAMYNGLESTLWRHILWNSGYFGCIFQVRAQLPAAEPGNKSQQTRNDLIAGTIGGTAGTILNTPMDVVKSRIQNTSKVPGQVPKYNWAWPAVGTVMKEEGFAALYKGFLPKVLRLGPGGGILLVVFTGVMDFFRNMRGE</sequence>
<proteinExistence type="inferred from homology"/>
<dbReference type="EC" id="7.-.-.-" evidence="3"/>
<dbReference type="EMBL" id="ACJE01000021">
    <property type="protein sequence ID" value="EHA17815.1"/>
    <property type="molecule type" value="Genomic_DNA"/>
</dbReference>
<dbReference type="SMR" id="G3YFS7"/>
<dbReference type="VEuPathDB" id="FungiDB:ASPNIDRAFT2_1113466"/>
<dbReference type="HOGENOM" id="CLU_015166_5_2_1"/>
<dbReference type="OrthoDB" id="39740at5052"/>
<dbReference type="Proteomes" id="UP000009038">
    <property type="component" value="Unassembled WGS sequence"/>
</dbReference>
<dbReference type="GO" id="GO:0005743">
    <property type="term" value="C:mitochondrial inner membrane"/>
    <property type="evidence" value="ECO:0007669"/>
    <property type="project" value="UniProtKB-SubCell"/>
</dbReference>
<dbReference type="GO" id="GO:0055085">
    <property type="term" value="P:transmembrane transport"/>
    <property type="evidence" value="ECO:0007669"/>
    <property type="project" value="InterPro"/>
</dbReference>
<dbReference type="FunFam" id="1.50.40.10:FF:000034">
    <property type="entry name" value="Mitochondrial 2-oxodicarboxylate carrier"/>
    <property type="match status" value="1"/>
</dbReference>
<dbReference type="Gene3D" id="1.50.40.10">
    <property type="entry name" value="Mitochondrial carrier domain"/>
    <property type="match status" value="1"/>
</dbReference>
<dbReference type="InterPro" id="IPR002067">
    <property type="entry name" value="Mit_carrier"/>
</dbReference>
<dbReference type="InterPro" id="IPR051752">
    <property type="entry name" value="Mito_2-oxodicarb_carrier"/>
</dbReference>
<dbReference type="InterPro" id="IPR018108">
    <property type="entry name" value="Mitochondrial_sb/sol_carrier"/>
</dbReference>
<dbReference type="InterPro" id="IPR023395">
    <property type="entry name" value="Mt_carrier_dom_sf"/>
</dbReference>
<dbReference type="PANTHER" id="PTHR46356">
    <property type="entry name" value="MITOCHONDRIAL 2-OXODICARBOXYLATE CARRIER"/>
    <property type="match status" value="1"/>
</dbReference>
<dbReference type="PANTHER" id="PTHR46356:SF1">
    <property type="entry name" value="MITOCHONDRIAL 2-OXODICARBOXYLATE CARRIER"/>
    <property type="match status" value="1"/>
</dbReference>
<dbReference type="Pfam" id="PF00153">
    <property type="entry name" value="Mito_carr"/>
    <property type="match status" value="3"/>
</dbReference>
<dbReference type="PRINTS" id="PR00926">
    <property type="entry name" value="MITOCARRIER"/>
</dbReference>
<dbReference type="SUPFAM" id="SSF103506">
    <property type="entry name" value="Mitochondrial carrier"/>
    <property type="match status" value="1"/>
</dbReference>
<dbReference type="PROSITE" id="PS50920">
    <property type="entry name" value="SOLCAR"/>
    <property type="match status" value="3"/>
</dbReference>
<reference key="1">
    <citation type="journal article" date="2011" name="Genome Res.">
        <title>Comparative genomics of citric-acid-producing Aspergillus niger ATCC 1015 versus enzyme-producing CBS 513.88.</title>
        <authorList>
            <person name="Andersen M.R."/>
            <person name="Salazar M.P."/>
            <person name="Schaap P.J."/>
            <person name="van de Vondervoort P.J.I."/>
            <person name="Culley D."/>
            <person name="Thykaer J."/>
            <person name="Frisvad J.C."/>
            <person name="Nielsen K.F."/>
            <person name="Albang R."/>
            <person name="Albermann K."/>
            <person name="Berka R.M."/>
            <person name="Braus G.H."/>
            <person name="Braus-Stromeyer S.A."/>
            <person name="Corrochano L.M."/>
            <person name="Dai Z."/>
            <person name="van Dijck P.W.M."/>
            <person name="Hofmann G."/>
            <person name="Lasure L.L."/>
            <person name="Magnuson J.K."/>
            <person name="Menke H."/>
            <person name="Meijer M."/>
            <person name="Meijer S.L."/>
            <person name="Nielsen J.B."/>
            <person name="Nielsen M.L."/>
            <person name="van Ooyen A.J.J."/>
            <person name="Pel H.J."/>
            <person name="Poulsen L."/>
            <person name="Samson R.A."/>
            <person name="Stam H."/>
            <person name="Tsang A."/>
            <person name="van den Brink J.M."/>
            <person name="Atkins A."/>
            <person name="Aerts A."/>
            <person name="Shapiro H."/>
            <person name="Pangilinan J."/>
            <person name="Salamov A."/>
            <person name="Lou Y."/>
            <person name="Lindquist E."/>
            <person name="Lucas S."/>
            <person name="Grimwood J."/>
            <person name="Grigoriev I.V."/>
            <person name="Kubicek C.P."/>
            <person name="Martinez D."/>
            <person name="van Peij N.N.M.E."/>
            <person name="Roubos J.A."/>
            <person name="Nielsen J."/>
            <person name="Baker S.E."/>
        </authorList>
    </citation>
    <scope>NUCLEOTIDE SEQUENCE [LARGE SCALE GENOMIC DNA]</scope>
    <source>
        <strain>ATCC 1015 / CBS 113.46 / FGSC A1144 / LSHB Ac4 / NCTC 3858a / NRRL 328 / USDA 3528.7</strain>
    </source>
</reference>
<reference key="2">
    <citation type="journal article" date="2022" name="Front. Microbiol.">
        <title>Identification and genetic characterization of mitochondrial citrate transporters in Aspergillus niger.</title>
        <authorList>
            <person name="Cao W."/>
            <person name="Zhang L."/>
            <person name="Wu L."/>
            <person name="Zhang M."/>
            <person name="Liu J."/>
            <person name="Xie Z."/>
            <person name="Liu H."/>
        </authorList>
    </citation>
    <scope>FUNCTION</scope>
    <scope>DISRUPTION PHENOTYPE</scope>
    <scope>TRANSPORT ACTIVITY</scope>
</reference>
<protein>
    <recommendedName>
        <fullName evidence="4">Mitochondrial citrate transporter D</fullName>
        <ecNumber evidence="3">7.-.-.-</ecNumber>
    </recommendedName>
</protein>